<comment type="function">
    <text evidence="1">Flavin prenyltransferase that catalyzes the synthesis of the prenylated FMN cofactor (prenyl-FMN) for 4-hydroxy-3-polyprenylbenzoic acid decarboxylase UbiD. The prenyltransferase is metal-independent and links a dimethylallyl moiety from dimethylallyl monophosphate (DMAP) to the flavin N5 and C6 atoms of FMN.</text>
</comment>
<comment type="catalytic activity">
    <reaction evidence="1">
        <text>dimethylallyl phosphate + FMNH2 = prenylated FMNH2 + phosphate</text>
        <dbReference type="Rhea" id="RHEA:37743"/>
        <dbReference type="ChEBI" id="CHEBI:43474"/>
        <dbReference type="ChEBI" id="CHEBI:57618"/>
        <dbReference type="ChEBI" id="CHEBI:87467"/>
        <dbReference type="ChEBI" id="CHEBI:88052"/>
        <dbReference type="EC" id="2.5.1.129"/>
    </reaction>
</comment>
<comment type="similarity">
    <text evidence="1">Belongs to the UbiX/PAD1 family.</text>
</comment>
<protein>
    <recommendedName>
        <fullName evidence="1">Flavin prenyltransferase UbiX</fullName>
        <ecNumber evidence="1">2.5.1.129</ecNumber>
    </recommendedName>
</protein>
<gene>
    <name evidence="1" type="primary">ubiX</name>
    <name type="ordered locus">Cj0768c</name>
</gene>
<reference key="1">
    <citation type="journal article" date="2000" name="Nature">
        <title>The genome sequence of the food-borne pathogen Campylobacter jejuni reveals hypervariable sequences.</title>
        <authorList>
            <person name="Parkhill J."/>
            <person name="Wren B.W."/>
            <person name="Mungall K.L."/>
            <person name="Ketley J.M."/>
            <person name="Churcher C.M."/>
            <person name="Basham D."/>
            <person name="Chillingworth T."/>
            <person name="Davies R.M."/>
            <person name="Feltwell T."/>
            <person name="Holroyd S."/>
            <person name="Jagels K."/>
            <person name="Karlyshev A.V."/>
            <person name="Moule S."/>
            <person name="Pallen M.J."/>
            <person name="Penn C.W."/>
            <person name="Quail M.A."/>
            <person name="Rajandream M.A."/>
            <person name="Rutherford K.M."/>
            <person name="van Vliet A.H.M."/>
            <person name="Whitehead S."/>
            <person name="Barrell B.G."/>
        </authorList>
    </citation>
    <scope>NUCLEOTIDE SEQUENCE [LARGE SCALE GENOMIC DNA]</scope>
    <source>
        <strain>ATCC 700819 / NCTC 11168</strain>
    </source>
</reference>
<sequence>MKVLLGISGSSSVNLGLKLLKNLENQCELYCILTQGAKLNFKTENQANLEEICQENFKYTHFLDDKNLSLSVASGSFGIEKTIIAPCSISSLAKIHAGFADTLLMRAAAVALKERKKLILGVREMPFSTLNLEHMLKLSQMGVIIAPPIIASYSKANNLEQMENFIAGKWLDLLEIKHNLYEKWQNF</sequence>
<proteinExistence type="inferred from homology"/>
<accession>Q9PPF1</accession>
<accession>Q0PAC2</accession>
<evidence type="ECO:0000255" key="1">
    <source>
        <dbReference type="HAMAP-Rule" id="MF_01984"/>
    </source>
</evidence>
<dbReference type="EC" id="2.5.1.129" evidence="1"/>
<dbReference type="EMBL" id="AL111168">
    <property type="protein sequence ID" value="CAL34896.1"/>
    <property type="molecule type" value="Genomic_DNA"/>
</dbReference>
<dbReference type="PIR" id="H81347">
    <property type="entry name" value="H81347"/>
</dbReference>
<dbReference type="RefSeq" id="WP_002852466.1">
    <property type="nucleotide sequence ID" value="NZ_SZUC01000001.1"/>
</dbReference>
<dbReference type="RefSeq" id="YP_002344175.1">
    <property type="nucleotide sequence ID" value="NC_002163.1"/>
</dbReference>
<dbReference type="SMR" id="Q9PPF1"/>
<dbReference type="IntAct" id="Q9PPF1">
    <property type="interactions" value="7"/>
</dbReference>
<dbReference type="STRING" id="192222.Cj0768c"/>
<dbReference type="PaxDb" id="192222-Cj0768c"/>
<dbReference type="EnsemblBacteria" id="CAL34896">
    <property type="protein sequence ID" value="CAL34896"/>
    <property type="gene ID" value="Cj0768c"/>
</dbReference>
<dbReference type="GeneID" id="905078"/>
<dbReference type="KEGG" id="cje:Cj0768c"/>
<dbReference type="PATRIC" id="fig|192222.6.peg.756"/>
<dbReference type="eggNOG" id="COG0163">
    <property type="taxonomic scope" value="Bacteria"/>
</dbReference>
<dbReference type="HOGENOM" id="CLU_074522_0_1_7"/>
<dbReference type="OrthoDB" id="9781577at2"/>
<dbReference type="Proteomes" id="UP000000799">
    <property type="component" value="Chromosome"/>
</dbReference>
<dbReference type="GO" id="GO:0106141">
    <property type="term" value="F:flavin prenyltransferase activity"/>
    <property type="evidence" value="ECO:0007669"/>
    <property type="project" value="UniProtKB-EC"/>
</dbReference>
<dbReference type="Gene3D" id="3.40.50.1950">
    <property type="entry name" value="Flavin prenyltransferase-like"/>
    <property type="match status" value="1"/>
</dbReference>
<dbReference type="HAMAP" id="MF_01984">
    <property type="entry name" value="ubiX_pad"/>
    <property type="match status" value="1"/>
</dbReference>
<dbReference type="InterPro" id="IPR036551">
    <property type="entry name" value="Flavin_trans-like"/>
</dbReference>
<dbReference type="InterPro" id="IPR003382">
    <property type="entry name" value="Flavoprotein"/>
</dbReference>
<dbReference type="InterPro" id="IPR004507">
    <property type="entry name" value="UbiX-like"/>
</dbReference>
<dbReference type="NCBIfam" id="NF004685">
    <property type="entry name" value="PRK06029.1"/>
    <property type="match status" value="1"/>
</dbReference>
<dbReference type="NCBIfam" id="TIGR00421">
    <property type="entry name" value="ubiX_pad"/>
    <property type="match status" value="1"/>
</dbReference>
<dbReference type="Pfam" id="PF02441">
    <property type="entry name" value="Flavoprotein"/>
    <property type="match status" value="1"/>
</dbReference>
<dbReference type="SUPFAM" id="SSF52507">
    <property type="entry name" value="Homo-oligomeric flavin-containing Cys decarboxylases, HFCD"/>
    <property type="match status" value="1"/>
</dbReference>
<keyword id="KW-0285">Flavoprotein</keyword>
<keyword id="KW-0288">FMN</keyword>
<keyword id="KW-0637">Prenyltransferase</keyword>
<keyword id="KW-1185">Reference proteome</keyword>
<keyword id="KW-0808">Transferase</keyword>
<feature type="chain" id="PRO_0000134958" description="Flavin prenyltransferase UbiX">
    <location>
        <begin position="1"/>
        <end position="187"/>
    </location>
</feature>
<feature type="binding site" evidence="1">
    <location>
        <begin position="9"/>
        <end position="11"/>
    </location>
    <ligand>
        <name>FMN</name>
        <dbReference type="ChEBI" id="CHEBI:58210"/>
    </ligand>
</feature>
<feature type="binding site" evidence="1">
    <location>
        <position position="34"/>
    </location>
    <ligand>
        <name>FMN</name>
        <dbReference type="ChEBI" id="CHEBI:58210"/>
    </ligand>
</feature>
<feature type="binding site" evidence="1">
    <location>
        <begin position="88"/>
        <end position="91"/>
    </location>
    <ligand>
        <name>FMN</name>
        <dbReference type="ChEBI" id="CHEBI:58210"/>
    </ligand>
</feature>
<feature type="binding site" evidence="1">
    <location>
        <position position="123"/>
    </location>
    <ligand>
        <name>FMN</name>
        <dbReference type="ChEBI" id="CHEBI:58210"/>
    </ligand>
</feature>
<feature type="binding site" evidence="1">
    <location>
        <position position="153"/>
    </location>
    <ligand>
        <name>dimethylallyl phosphate</name>
        <dbReference type="ChEBI" id="CHEBI:88052"/>
    </ligand>
</feature>
<feature type="binding site" evidence="1">
    <location>
        <position position="169"/>
    </location>
    <ligand>
        <name>dimethylallyl phosphate</name>
        <dbReference type="ChEBI" id="CHEBI:88052"/>
    </ligand>
</feature>
<organism>
    <name type="scientific">Campylobacter jejuni subsp. jejuni serotype O:2 (strain ATCC 700819 / NCTC 11168)</name>
    <dbReference type="NCBI Taxonomy" id="192222"/>
    <lineage>
        <taxon>Bacteria</taxon>
        <taxon>Pseudomonadati</taxon>
        <taxon>Campylobacterota</taxon>
        <taxon>Epsilonproteobacteria</taxon>
        <taxon>Campylobacterales</taxon>
        <taxon>Campylobacteraceae</taxon>
        <taxon>Campylobacter</taxon>
    </lineage>
</organism>
<name>UBIX_CAMJE</name>